<comment type="function">
    <text evidence="1 3 4">Non-catalytic subunit of the V1 complex of vacuolar(H+)-ATPase (V-ATPase), a multisubunit enzyme composed of a peripheral complex (V1) that hydrolyzes ATP and a membrane integral complex (V0) that translocates protons (By similarity). V-ATPase is responsible for acidifying and maintaining the pH of intracellular compartments and in some cell types, is targeted to the plasma membrane, where it is responsible for acidifying the extracellular environment (By similarity). Essential for the proper assembly and activity of V-ATPase (By similarity). Required maternally for early embryogenesis and zygotically during morphogenesis. Specifically, involved in the clearance of apoptotic cell corpses in embryos. Also, during embryonic development, the V-ATPase is required to repress fusion of epidermal cells probably by negatively regulating eff-1-mediated cell fusion. In neurons, required for necrotic cell death by promoting intracellular acidification. Required for cell death induced by hypoxia. Required for acidification of synaptic vesicles and the release of neurotransmitters from adult neurons (By similarity).</text>
</comment>
<comment type="subunit">
    <text evidence="3">V-ATPase is a heteromultimeric enzyme made up of two complexes: the ATP-hydrolytic V1 complex and the proton translocation V0 complex. The V1 complex consists of three catalytic AB heterodimers that form a heterohexamer, three peripheral stalks each consisting of EG heterodimers, one central rotor including subunits D and F, and the regulatory subunits C and H. The proton translocation complex V0 consists of the proton transport subunit a, a ring of proteolipid subunits c9c'', rotary subunit d, subunits e and f, and the accessory subunits vah-19/Ac45 and vah-20/PRR.</text>
</comment>
<comment type="similarity">
    <text evidence="5">Belongs to the ATPase alpha/beta chains family.</text>
</comment>
<name>VATB1_CAEBR</name>
<gene>
    <name evidence="4" type="primary">vha-12</name>
    <name evidence="6" type="ORF">CBG14362</name>
</gene>
<feature type="chain" id="PRO_0000278178" description="Probable V-type proton ATPase subunit B 1">
    <location>
        <begin position="1"/>
        <end position="491"/>
    </location>
</feature>
<feature type="binding site" evidence="2">
    <location>
        <position position="380"/>
    </location>
    <ligand>
        <name>ATP</name>
        <dbReference type="ChEBI" id="CHEBI:30616"/>
    </ligand>
</feature>
<accession>Q619C0</accession>
<accession>A8XJU3</accession>
<protein>
    <recommendedName>
        <fullName>Probable V-type proton ATPase subunit B 1</fullName>
        <shortName>V-ATPase subunit B 1</shortName>
    </recommendedName>
    <alternativeName>
        <fullName>Vacuolar proton pump subunit B 1</fullName>
    </alternativeName>
</protein>
<keyword id="KW-0067">ATP-binding</keyword>
<keyword id="KW-0375">Hydrogen ion transport</keyword>
<keyword id="KW-0406">Ion transport</keyword>
<keyword id="KW-0547">Nucleotide-binding</keyword>
<keyword id="KW-1185">Reference proteome</keyword>
<keyword id="KW-0813">Transport</keyword>
<organism>
    <name type="scientific">Caenorhabditis briggsae</name>
    <dbReference type="NCBI Taxonomy" id="6238"/>
    <lineage>
        <taxon>Eukaryota</taxon>
        <taxon>Metazoa</taxon>
        <taxon>Ecdysozoa</taxon>
        <taxon>Nematoda</taxon>
        <taxon>Chromadorea</taxon>
        <taxon>Rhabditida</taxon>
        <taxon>Rhabditina</taxon>
        <taxon>Rhabditomorpha</taxon>
        <taxon>Rhabditoidea</taxon>
        <taxon>Rhabditidae</taxon>
        <taxon>Peloderinae</taxon>
        <taxon>Caenorhabditis</taxon>
    </lineage>
</organism>
<evidence type="ECO:0000250" key="1">
    <source>
        <dbReference type="UniProtKB" id="P15313"/>
    </source>
</evidence>
<evidence type="ECO:0000250" key="2">
    <source>
        <dbReference type="UniProtKB" id="P21281"/>
    </source>
</evidence>
<evidence type="ECO:0000250" key="3">
    <source>
        <dbReference type="UniProtKB" id="P31408"/>
    </source>
</evidence>
<evidence type="ECO:0000250" key="4">
    <source>
        <dbReference type="UniProtKB" id="Q19626"/>
    </source>
</evidence>
<evidence type="ECO:0000255" key="5"/>
<evidence type="ECO:0000312" key="6">
    <source>
        <dbReference type="WormBase" id="CBG14362a"/>
    </source>
</evidence>
<reference key="1">
    <citation type="journal article" date="2003" name="PLoS Biol.">
        <title>The genome sequence of Caenorhabditis briggsae: a platform for comparative genomics.</title>
        <authorList>
            <person name="Stein L.D."/>
            <person name="Bao Z."/>
            <person name="Blasiar D."/>
            <person name="Blumenthal T."/>
            <person name="Brent M.R."/>
            <person name="Chen N."/>
            <person name="Chinwalla A."/>
            <person name="Clarke L."/>
            <person name="Clee C."/>
            <person name="Coghlan A."/>
            <person name="Coulson A."/>
            <person name="D'Eustachio P."/>
            <person name="Fitch D.H.A."/>
            <person name="Fulton L.A."/>
            <person name="Fulton R.E."/>
            <person name="Griffiths-Jones S."/>
            <person name="Harris T.W."/>
            <person name="Hillier L.W."/>
            <person name="Kamath R."/>
            <person name="Kuwabara P.E."/>
            <person name="Mardis E.R."/>
            <person name="Marra M.A."/>
            <person name="Miner T.L."/>
            <person name="Minx P."/>
            <person name="Mullikin J.C."/>
            <person name="Plumb R.W."/>
            <person name="Rogers J."/>
            <person name="Schein J.E."/>
            <person name="Sohrmann M."/>
            <person name="Spieth J."/>
            <person name="Stajich J.E."/>
            <person name="Wei C."/>
            <person name="Willey D."/>
            <person name="Wilson R.K."/>
            <person name="Durbin R.M."/>
            <person name="Waterston R.H."/>
        </authorList>
    </citation>
    <scope>NUCLEOTIDE SEQUENCE [LARGE SCALE GENOMIC DNA]</scope>
    <source>
        <strain>AF16</strain>
    </source>
</reference>
<sequence length="491" mass="54662">MAAVDVNQTITGHKSAIIRNYTTNPRLIYQTVSGVNGPLVILNDVKFPQFSEIVKITLPDGSQRSGQVLEIAKNKAVVQVFEGTSGIDAKNTICEFTGDILRTPVSEDMLGRIFNGSGKPIDKGPPVLAEDFLDINGQPINPWSRIYPEEMIQTGISAIDVMNSIARGQKIPIFSAAGLPHNEIAAQIVRQGGLVQLPDRPHEQTNFAIVFAAMGVNMETARFFKQDFEENGSMENVCLFLNLANDPTIERIITPRIALTAAEFLAYQCSKHVLVVLTDMSSYAEALREVSAAREEVPGRRGFPGYMYTDLATIYERAGRVEGRDGSITQIPILTMPNDDITHPIPDLTGYITEGQIYVDRQLHNRLIYPPINVLPSLSRLMKSAIGDKMTREDHSDVSNQLYACYAIGKDVQAMKAVVGEEALSSDDLLYLEFLVKFEKNFISQGHYENRTIFESLDIGWELLRIFPREMLKRIPAKSLDKYYPRGGAKE</sequence>
<proteinExistence type="inferred from homology"/>
<dbReference type="EMBL" id="HE600983">
    <property type="protein sequence ID" value="CAP32919.1"/>
    <property type="molecule type" value="Genomic_DNA"/>
</dbReference>
<dbReference type="SMR" id="Q619C0"/>
<dbReference type="FunCoup" id="Q619C0">
    <property type="interactions" value="2216"/>
</dbReference>
<dbReference type="STRING" id="6238.Q619C0"/>
<dbReference type="EnsemblMetazoa" id="CBG14362a.1">
    <property type="protein sequence ID" value="CBG14362a.1"/>
    <property type="gene ID" value="WBGene00034889"/>
</dbReference>
<dbReference type="KEGG" id="cbr:CBG_14362"/>
<dbReference type="CTD" id="8586476"/>
<dbReference type="WormBase" id="CBG14362a">
    <property type="protein sequence ID" value="CBP18033"/>
    <property type="gene ID" value="WBGene00034889"/>
    <property type="gene designation" value="Cbr-vha-12"/>
</dbReference>
<dbReference type="eggNOG" id="KOG1351">
    <property type="taxonomic scope" value="Eukaryota"/>
</dbReference>
<dbReference type="HOGENOM" id="CLU_022916_0_0_1"/>
<dbReference type="InParanoid" id="Q619C0"/>
<dbReference type="OMA" id="EGFKIKP"/>
<dbReference type="Proteomes" id="UP000008549">
    <property type="component" value="Unassembled WGS sequence"/>
</dbReference>
<dbReference type="GO" id="GO:0033180">
    <property type="term" value="C:proton-transporting V-type ATPase, V1 domain"/>
    <property type="evidence" value="ECO:0007669"/>
    <property type="project" value="InterPro"/>
</dbReference>
<dbReference type="GO" id="GO:0005524">
    <property type="term" value="F:ATP binding"/>
    <property type="evidence" value="ECO:0007669"/>
    <property type="project" value="UniProtKB-KW"/>
</dbReference>
<dbReference type="GO" id="GO:0046961">
    <property type="term" value="F:proton-transporting ATPase activity, rotational mechanism"/>
    <property type="evidence" value="ECO:0000318"/>
    <property type="project" value="GO_Central"/>
</dbReference>
<dbReference type="GO" id="GO:0046034">
    <property type="term" value="P:ATP metabolic process"/>
    <property type="evidence" value="ECO:0007669"/>
    <property type="project" value="InterPro"/>
</dbReference>
<dbReference type="GO" id="GO:0098609">
    <property type="term" value="P:cell-cell adhesion"/>
    <property type="evidence" value="ECO:0007669"/>
    <property type="project" value="EnsemblMetazoa"/>
</dbReference>
<dbReference type="GO" id="GO:1904747">
    <property type="term" value="P:positive regulation of apoptotic process involved in development"/>
    <property type="evidence" value="ECO:0007669"/>
    <property type="project" value="EnsemblMetazoa"/>
</dbReference>
<dbReference type="GO" id="GO:0001956">
    <property type="term" value="P:positive regulation of neurotransmitter secretion"/>
    <property type="evidence" value="ECO:0007669"/>
    <property type="project" value="EnsemblMetazoa"/>
</dbReference>
<dbReference type="GO" id="GO:0060142">
    <property type="term" value="P:regulation of syncytium formation by plasma membrane fusion"/>
    <property type="evidence" value="ECO:0007669"/>
    <property type="project" value="EnsemblMetazoa"/>
</dbReference>
<dbReference type="GO" id="GO:0001666">
    <property type="term" value="P:response to hypoxia"/>
    <property type="evidence" value="ECO:0007669"/>
    <property type="project" value="EnsemblMetazoa"/>
</dbReference>
<dbReference type="GO" id="GO:0007035">
    <property type="term" value="P:vacuolar acidification"/>
    <property type="evidence" value="ECO:0000318"/>
    <property type="project" value="GO_Central"/>
</dbReference>
<dbReference type="CDD" id="cd18112">
    <property type="entry name" value="ATP-synt_V_A-type_beta_C"/>
    <property type="match status" value="1"/>
</dbReference>
<dbReference type="CDD" id="cd18118">
    <property type="entry name" value="ATP-synt_V_A-type_beta_N"/>
    <property type="match status" value="1"/>
</dbReference>
<dbReference type="CDD" id="cd01135">
    <property type="entry name" value="V_A-ATPase_B"/>
    <property type="match status" value="1"/>
</dbReference>
<dbReference type="FunFam" id="3.40.50.12240:FF:000001">
    <property type="entry name" value="V-type proton ATPase subunit B, brain"/>
    <property type="match status" value="1"/>
</dbReference>
<dbReference type="Gene3D" id="3.40.50.12240">
    <property type="match status" value="1"/>
</dbReference>
<dbReference type="HAMAP" id="MF_00310">
    <property type="entry name" value="ATP_synth_B_arch"/>
    <property type="match status" value="1"/>
</dbReference>
<dbReference type="InterPro" id="IPR055190">
    <property type="entry name" value="ATP-synt_VA_C"/>
</dbReference>
<dbReference type="InterPro" id="IPR020003">
    <property type="entry name" value="ATPase_a/bsu_AS"/>
</dbReference>
<dbReference type="InterPro" id="IPR004100">
    <property type="entry name" value="ATPase_F1/V1/A1_a/bsu_N"/>
</dbReference>
<dbReference type="InterPro" id="IPR000194">
    <property type="entry name" value="ATPase_F1/V1/A1_a/bsu_nucl-bd"/>
</dbReference>
<dbReference type="InterPro" id="IPR005723">
    <property type="entry name" value="ATPase_V1-cplx_bsu"/>
</dbReference>
<dbReference type="InterPro" id="IPR027417">
    <property type="entry name" value="P-loop_NTPase"/>
</dbReference>
<dbReference type="InterPro" id="IPR022879">
    <property type="entry name" value="V-ATPase_su_B/beta"/>
</dbReference>
<dbReference type="NCBIfam" id="NF003235">
    <property type="entry name" value="PRK04196.1"/>
    <property type="match status" value="1"/>
</dbReference>
<dbReference type="NCBIfam" id="TIGR01040">
    <property type="entry name" value="V-ATPase_V1_B"/>
    <property type="match status" value="1"/>
</dbReference>
<dbReference type="PANTHER" id="PTHR43389">
    <property type="entry name" value="V-TYPE PROTON ATPASE SUBUNIT B"/>
    <property type="match status" value="1"/>
</dbReference>
<dbReference type="PANTHER" id="PTHR43389:SF4">
    <property type="entry name" value="V-TYPE PROTON ATPASE SUBUNIT B"/>
    <property type="match status" value="1"/>
</dbReference>
<dbReference type="Pfam" id="PF00006">
    <property type="entry name" value="ATP-synt_ab"/>
    <property type="match status" value="1"/>
</dbReference>
<dbReference type="Pfam" id="PF02874">
    <property type="entry name" value="ATP-synt_ab_N"/>
    <property type="match status" value="1"/>
</dbReference>
<dbReference type="Pfam" id="PF22919">
    <property type="entry name" value="ATP-synt_VA_C"/>
    <property type="match status" value="1"/>
</dbReference>
<dbReference type="PIRSF" id="PIRSF039114">
    <property type="entry name" value="V-ATPsynth_beta/V-ATPase_B"/>
    <property type="match status" value="1"/>
</dbReference>
<dbReference type="SUPFAM" id="SSF52540">
    <property type="entry name" value="P-loop containing nucleoside triphosphate hydrolases"/>
    <property type="match status" value="1"/>
</dbReference>
<dbReference type="PROSITE" id="PS00152">
    <property type="entry name" value="ATPASE_ALPHA_BETA"/>
    <property type="match status" value="1"/>
</dbReference>